<evidence type="ECO:0000255" key="1">
    <source>
        <dbReference type="PROSITE-ProRule" id="PRU01182"/>
    </source>
</evidence>
<evidence type="ECO:0000305" key="2"/>
<feature type="chain" id="PRO_0000190706" description="UPF0758 protein LL1007">
    <location>
        <begin position="1"/>
        <end position="226"/>
    </location>
</feature>
<feature type="domain" description="MPN" evidence="1">
    <location>
        <begin position="103"/>
        <end position="225"/>
    </location>
</feature>
<feature type="short sequence motif" description="JAMM motif" evidence="1">
    <location>
        <begin position="174"/>
        <end position="187"/>
    </location>
</feature>
<feature type="binding site" evidence="1">
    <location>
        <position position="174"/>
    </location>
    <ligand>
        <name>Zn(2+)</name>
        <dbReference type="ChEBI" id="CHEBI:29105"/>
        <note>catalytic</note>
    </ligand>
</feature>
<feature type="binding site" evidence="1">
    <location>
        <position position="176"/>
    </location>
    <ligand>
        <name>Zn(2+)</name>
        <dbReference type="ChEBI" id="CHEBI:29105"/>
        <note>catalytic</note>
    </ligand>
</feature>
<feature type="binding site" evidence="1">
    <location>
        <position position="187"/>
    </location>
    <ligand>
        <name>Zn(2+)</name>
        <dbReference type="ChEBI" id="CHEBI:29105"/>
        <note>catalytic</note>
    </ligand>
</feature>
<proteinExistence type="inferred from homology"/>
<sequence>MYELKENPYPMQPRERLEFLGEECLSDVELLAILLRTGTKKYSSLNLALEILQHFETLDNLRKASINELREISGIGLAKSIEIRAMIEFGKRIQTTNRKRYGQVLSSREYGLSLAFEMQNFEQEHLVATYLDGQNRIIEKKTIFIGAVNQATASPREILYHAIKNLSVGLLVAHNHPSGNLKPSQADKIFTTKIKKSCEDVGINFIDHIIVGAGNYFSFREEEIRK</sequence>
<accession>Q9CGT5</accession>
<dbReference type="EMBL" id="AE005176">
    <property type="protein sequence ID" value="AAK05105.1"/>
    <property type="molecule type" value="Genomic_DNA"/>
</dbReference>
<dbReference type="PIR" id="G86750">
    <property type="entry name" value="G86750"/>
</dbReference>
<dbReference type="RefSeq" id="NP_267163.1">
    <property type="nucleotide sequence ID" value="NC_002662.1"/>
</dbReference>
<dbReference type="SMR" id="Q9CGT5"/>
<dbReference type="PaxDb" id="272623-L0306"/>
<dbReference type="EnsemblBacteria" id="AAK05105">
    <property type="protein sequence ID" value="AAK05105"/>
    <property type="gene ID" value="L0306"/>
</dbReference>
<dbReference type="KEGG" id="lla:L0306"/>
<dbReference type="PATRIC" id="fig|272623.7.peg.1077"/>
<dbReference type="eggNOG" id="COG2003">
    <property type="taxonomic scope" value="Bacteria"/>
</dbReference>
<dbReference type="HOGENOM" id="CLU_073529_0_2_9"/>
<dbReference type="OrthoDB" id="9804482at2"/>
<dbReference type="Proteomes" id="UP000002196">
    <property type="component" value="Chromosome"/>
</dbReference>
<dbReference type="GO" id="GO:0046872">
    <property type="term" value="F:metal ion binding"/>
    <property type="evidence" value="ECO:0007669"/>
    <property type="project" value="UniProtKB-KW"/>
</dbReference>
<dbReference type="GO" id="GO:0008237">
    <property type="term" value="F:metallopeptidase activity"/>
    <property type="evidence" value="ECO:0007669"/>
    <property type="project" value="UniProtKB-KW"/>
</dbReference>
<dbReference type="GO" id="GO:0006508">
    <property type="term" value="P:proteolysis"/>
    <property type="evidence" value="ECO:0007669"/>
    <property type="project" value="UniProtKB-KW"/>
</dbReference>
<dbReference type="CDD" id="cd08071">
    <property type="entry name" value="MPN_DUF2466"/>
    <property type="match status" value="1"/>
</dbReference>
<dbReference type="Gene3D" id="1.10.150.20">
    <property type="entry name" value="5' to 3' exonuclease, C-terminal subdomain"/>
    <property type="match status" value="1"/>
</dbReference>
<dbReference type="Gene3D" id="3.40.140.10">
    <property type="entry name" value="Cytidine Deaminase, domain 2"/>
    <property type="match status" value="1"/>
</dbReference>
<dbReference type="InterPro" id="IPR037518">
    <property type="entry name" value="MPN"/>
</dbReference>
<dbReference type="InterPro" id="IPR025657">
    <property type="entry name" value="RadC_JAB"/>
</dbReference>
<dbReference type="InterPro" id="IPR010994">
    <property type="entry name" value="RuvA_2-like"/>
</dbReference>
<dbReference type="InterPro" id="IPR001405">
    <property type="entry name" value="UPF0758"/>
</dbReference>
<dbReference type="InterPro" id="IPR020891">
    <property type="entry name" value="UPF0758_CS"/>
</dbReference>
<dbReference type="InterPro" id="IPR046778">
    <property type="entry name" value="UPF0758_N"/>
</dbReference>
<dbReference type="NCBIfam" id="NF000642">
    <property type="entry name" value="PRK00024.1"/>
    <property type="match status" value="1"/>
</dbReference>
<dbReference type="NCBIfam" id="TIGR00608">
    <property type="entry name" value="radc"/>
    <property type="match status" value="1"/>
</dbReference>
<dbReference type="PANTHER" id="PTHR30471">
    <property type="entry name" value="DNA REPAIR PROTEIN RADC"/>
    <property type="match status" value="1"/>
</dbReference>
<dbReference type="PANTHER" id="PTHR30471:SF3">
    <property type="entry name" value="UPF0758 PROTEIN YEES-RELATED"/>
    <property type="match status" value="1"/>
</dbReference>
<dbReference type="Pfam" id="PF04002">
    <property type="entry name" value="RadC"/>
    <property type="match status" value="1"/>
</dbReference>
<dbReference type="Pfam" id="PF20582">
    <property type="entry name" value="UPF0758_N"/>
    <property type="match status" value="1"/>
</dbReference>
<dbReference type="SUPFAM" id="SSF47781">
    <property type="entry name" value="RuvA domain 2-like"/>
    <property type="match status" value="1"/>
</dbReference>
<dbReference type="PROSITE" id="PS50249">
    <property type="entry name" value="MPN"/>
    <property type="match status" value="1"/>
</dbReference>
<dbReference type="PROSITE" id="PS01302">
    <property type="entry name" value="UPF0758"/>
    <property type="match status" value="1"/>
</dbReference>
<reference key="1">
    <citation type="journal article" date="2001" name="Genome Res.">
        <title>The complete genome sequence of the lactic acid bacterium Lactococcus lactis ssp. lactis IL1403.</title>
        <authorList>
            <person name="Bolotin A."/>
            <person name="Wincker P."/>
            <person name="Mauger S."/>
            <person name="Jaillon O."/>
            <person name="Malarme K."/>
            <person name="Weissenbach J."/>
            <person name="Ehrlich S.D."/>
            <person name="Sorokin A."/>
        </authorList>
    </citation>
    <scope>NUCLEOTIDE SEQUENCE [LARGE SCALE GENOMIC DNA]</scope>
    <source>
        <strain>IL1403</strain>
    </source>
</reference>
<keyword id="KW-0378">Hydrolase</keyword>
<keyword id="KW-0479">Metal-binding</keyword>
<keyword id="KW-0482">Metalloprotease</keyword>
<keyword id="KW-0645">Protease</keyword>
<keyword id="KW-1185">Reference proteome</keyword>
<keyword id="KW-0862">Zinc</keyword>
<comment type="similarity">
    <text evidence="2">Belongs to the UPF0758 family.</text>
</comment>
<protein>
    <recommendedName>
        <fullName>UPF0758 protein LL1007</fullName>
    </recommendedName>
</protein>
<gene>
    <name type="ordered locus">LL1007</name>
    <name type="ORF">L0306</name>
</gene>
<name>Y1007_LACLA</name>
<organism>
    <name type="scientific">Lactococcus lactis subsp. lactis (strain IL1403)</name>
    <name type="common">Streptococcus lactis</name>
    <dbReference type="NCBI Taxonomy" id="272623"/>
    <lineage>
        <taxon>Bacteria</taxon>
        <taxon>Bacillati</taxon>
        <taxon>Bacillota</taxon>
        <taxon>Bacilli</taxon>
        <taxon>Lactobacillales</taxon>
        <taxon>Streptococcaceae</taxon>
        <taxon>Lactococcus</taxon>
    </lineage>
</organism>